<reference key="1">
    <citation type="journal article" date="2002" name="Proc. Natl. Acad. Sci. U.S.A.">
        <title>Complete genome sequence and comparative genomic analysis of an emerging human pathogen, serotype V Streptococcus agalactiae.</title>
        <authorList>
            <person name="Tettelin H."/>
            <person name="Masignani V."/>
            <person name="Cieslewicz M.J."/>
            <person name="Eisen J.A."/>
            <person name="Peterson S.N."/>
            <person name="Wessels M.R."/>
            <person name="Paulsen I.T."/>
            <person name="Nelson K.E."/>
            <person name="Margarit I."/>
            <person name="Read T.D."/>
            <person name="Madoff L.C."/>
            <person name="Wolf A.M."/>
            <person name="Beanan M.J."/>
            <person name="Brinkac L.M."/>
            <person name="Daugherty S.C."/>
            <person name="DeBoy R.T."/>
            <person name="Durkin A.S."/>
            <person name="Kolonay J.F."/>
            <person name="Madupu R."/>
            <person name="Lewis M.R."/>
            <person name="Radune D."/>
            <person name="Fedorova N.B."/>
            <person name="Scanlan D."/>
            <person name="Khouri H.M."/>
            <person name="Mulligan S."/>
            <person name="Carty H.A."/>
            <person name="Cline R.T."/>
            <person name="Van Aken S.E."/>
            <person name="Gill J."/>
            <person name="Scarselli M."/>
            <person name="Mora M."/>
            <person name="Iacobini E.T."/>
            <person name="Brettoni C."/>
            <person name="Galli G."/>
            <person name="Mariani M."/>
            <person name="Vegni F."/>
            <person name="Maione D."/>
            <person name="Rinaudo D."/>
            <person name="Rappuoli R."/>
            <person name="Telford J.L."/>
            <person name="Kasper D.L."/>
            <person name="Grandi G."/>
            <person name="Fraser C.M."/>
        </authorList>
    </citation>
    <scope>NUCLEOTIDE SEQUENCE [LARGE SCALE GENOMIC DNA]</scope>
    <source>
        <strain>ATCC BAA-611 / 2603 V/R</strain>
    </source>
</reference>
<name>PTH_STRA5</name>
<proteinExistence type="inferred from homology"/>
<organism>
    <name type="scientific">Streptococcus agalactiae serotype V (strain ATCC BAA-611 / 2603 V/R)</name>
    <dbReference type="NCBI Taxonomy" id="208435"/>
    <lineage>
        <taxon>Bacteria</taxon>
        <taxon>Bacillati</taxon>
        <taxon>Bacillota</taxon>
        <taxon>Bacilli</taxon>
        <taxon>Lactobacillales</taxon>
        <taxon>Streptococcaceae</taxon>
        <taxon>Streptococcus</taxon>
    </lineage>
</organism>
<evidence type="ECO:0000255" key="1">
    <source>
        <dbReference type="HAMAP-Rule" id="MF_00083"/>
    </source>
</evidence>
<accession>Q8E2I1</accession>
<dbReference type="EC" id="3.1.1.29" evidence="1"/>
<dbReference type="EMBL" id="AE009948">
    <property type="protein sequence ID" value="AAM98915.1"/>
    <property type="molecule type" value="Genomic_DNA"/>
</dbReference>
<dbReference type="RefSeq" id="NP_687043.1">
    <property type="nucleotide sequence ID" value="NC_004116.1"/>
</dbReference>
<dbReference type="RefSeq" id="WP_000240196.1">
    <property type="nucleotide sequence ID" value="NC_004116.1"/>
</dbReference>
<dbReference type="SMR" id="Q8E2I1"/>
<dbReference type="STRING" id="208435.SAG0007"/>
<dbReference type="KEGG" id="sag:SAG0007"/>
<dbReference type="PATRIC" id="fig|208435.3.peg.7"/>
<dbReference type="HOGENOM" id="CLU_062456_4_1_9"/>
<dbReference type="OrthoDB" id="9800507at2"/>
<dbReference type="Proteomes" id="UP000000821">
    <property type="component" value="Chromosome"/>
</dbReference>
<dbReference type="GO" id="GO:0005737">
    <property type="term" value="C:cytoplasm"/>
    <property type="evidence" value="ECO:0007669"/>
    <property type="project" value="UniProtKB-SubCell"/>
</dbReference>
<dbReference type="GO" id="GO:0004045">
    <property type="term" value="F:peptidyl-tRNA hydrolase activity"/>
    <property type="evidence" value="ECO:0007669"/>
    <property type="project" value="UniProtKB-UniRule"/>
</dbReference>
<dbReference type="GO" id="GO:0000049">
    <property type="term" value="F:tRNA binding"/>
    <property type="evidence" value="ECO:0007669"/>
    <property type="project" value="UniProtKB-UniRule"/>
</dbReference>
<dbReference type="GO" id="GO:0006515">
    <property type="term" value="P:protein quality control for misfolded or incompletely synthesized proteins"/>
    <property type="evidence" value="ECO:0007669"/>
    <property type="project" value="UniProtKB-UniRule"/>
</dbReference>
<dbReference type="GO" id="GO:0072344">
    <property type="term" value="P:rescue of stalled ribosome"/>
    <property type="evidence" value="ECO:0007669"/>
    <property type="project" value="UniProtKB-UniRule"/>
</dbReference>
<dbReference type="CDD" id="cd00462">
    <property type="entry name" value="PTH"/>
    <property type="match status" value="1"/>
</dbReference>
<dbReference type="FunFam" id="3.40.50.1470:FF:000001">
    <property type="entry name" value="Peptidyl-tRNA hydrolase"/>
    <property type="match status" value="1"/>
</dbReference>
<dbReference type="Gene3D" id="3.40.50.1470">
    <property type="entry name" value="Peptidyl-tRNA hydrolase"/>
    <property type="match status" value="1"/>
</dbReference>
<dbReference type="HAMAP" id="MF_00083">
    <property type="entry name" value="Pept_tRNA_hydro_bact"/>
    <property type="match status" value="1"/>
</dbReference>
<dbReference type="InterPro" id="IPR001328">
    <property type="entry name" value="Pept_tRNA_hydro"/>
</dbReference>
<dbReference type="InterPro" id="IPR018171">
    <property type="entry name" value="Pept_tRNA_hydro_CS"/>
</dbReference>
<dbReference type="InterPro" id="IPR036416">
    <property type="entry name" value="Pept_tRNA_hydro_sf"/>
</dbReference>
<dbReference type="NCBIfam" id="TIGR00447">
    <property type="entry name" value="pth"/>
    <property type="match status" value="1"/>
</dbReference>
<dbReference type="PANTHER" id="PTHR17224">
    <property type="entry name" value="PEPTIDYL-TRNA HYDROLASE"/>
    <property type="match status" value="1"/>
</dbReference>
<dbReference type="PANTHER" id="PTHR17224:SF1">
    <property type="entry name" value="PEPTIDYL-TRNA HYDROLASE"/>
    <property type="match status" value="1"/>
</dbReference>
<dbReference type="Pfam" id="PF01195">
    <property type="entry name" value="Pept_tRNA_hydro"/>
    <property type="match status" value="1"/>
</dbReference>
<dbReference type="SUPFAM" id="SSF53178">
    <property type="entry name" value="Peptidyl-tRNA hydrolase-like"/>
    <property type="match status" value="1"/>
</dbReference>
<dbReference type="PROSITE" id="PS01195">
    <property type="entry name" value="PEPT_TRNA_HYDROL_1"/>
    <property type="match status" value="1"/>
</dbReference>
<dbReference type="PROSITE" id="PS01196">
    <property type="entry name" value="PEPT_TRNA_HYDROL_2"/>
    <property type="match status" value="1"/>
</dbReference>
<feature type="chain" id="PRO_0000187824" description="Peptidyl-tRNA hydrolase">
    <location>
        <begin position="1"/>
        <end position="191"/>
    </location>
</feature>
<feature type="active site" description="Proton acceptor" evidence="1">
    <location>
        <position position="20"/>
    </location>
</feature>
<feature type="binding site" evidence="1">
    <location>
        <position position="15"/>
    </location>
    <ligand>
        <name>tRNA</name>
        <dbReference type="ChEBI" id="CHEBI:17843"/>
    </ligand>
</feature>
<feature type="binding site" evidence="1">
    <location>
        <position position="66"/>
    </location>
    <ligand>
        <name>tRNA</name>
        <dbReference type="ChEBI" id="CHEBI:17843"/>
    </ligand>
</feature>
<feature type="binding site" evidence="1">
    <location>
        <position position="68"/>
    </location>
    <ligand>
        <name>tRNA</name>
        <dbReference type="ChEBI" id="CHEBI:17843"/>
    </ligand>
</feature>
<feature type="binding site" evidence="1">
    <location>
        <position position="114"/>
    </location>
    <ligand>
        <name>tRNA</name>
        <dbReference type="ChEBI" id="CHEBI:17843"/>
    </ligand>
</feature>
<feature type="site" description="Discriminates between blocked and unblocked aminoacyl-tRNA" evidence="1">
    <location>
        <position position="10"/>
    </location>
</feature>
<feature type="site" description="Stabilizes the basic form of H active site to accept a proton" evidence="1">
    <location>
        <position position="93"/>
    </location>
</feature>
<keyword id="KW-0963">Cytoplasm</keyword>
<keyword id="KW-0378">Hydrolase</keyword>
<keyword id="KW-1185">Reference proteome</keyword>
<keyword id="KW-0694">RNA-binding</keyword>
<keyword id="KW-0820">tRNA-binding</keyword>
<comment type="function">
    <text evidence="1">Hydrolyzes ribosome-free peptidyl-tRNAs (with 1 or more amino acids incorporated), which drop off the ribosome during protein synthesis, or as a result of ribosome stalling.</text>
</comment>
<comment type="function">
    <text evidence="1">Catalyzes the release of premature peptidyl moieties from peptidyl-tRNA molecules trapped in stalled 50S ribosomal subunits, and thus maintains levels of free tRNAs and 50S ribosomes.</text>
</comment>
<comment type="catalytic activity">
    <reaction evidence="1">
        <text>an N-acyl-L-alpha-aminoacyl-tRNA + H2O = an N-acyl-L-amino acid + a tRNA + H(+)</text>
        <dbReference type="Rhea" id="RHEA:54448"/>
        <dbReference type="Rhea" id="RHEA-COMP:10123"/>
        <dbReference type="Rhea" id="RHEA-COMP:13883"/>
        <dbReference type="ChEBI" id="CHEBI:15377"/>
        <dbReference type="ChEBI" id="CHEBI:15378"/>
        <dbReference type="ChEBI" id="CHEBI:59874"/>
        <dbReference type="ChEBI" id="CHEBI:78442"/>
        <dbReference type="ChEBI" id="CHEBI:138191"/>
        <dbReference type="EC" id="3.1.1.29"/>
    </reaction>
</comment>
<comment type="subunit">
    <text evidence="1">Monomer.</text>
</comment>
<comment type="subcellular location">
    <subcellularLocation>
        <location evidence="1">Cytoplasm</location>
    </subcellularLocation>
</comment>
<comment type="similarity">
    <text evidence="1">Belongs to the PTH family.</text>
</comment>
<sequence length="191" mass="21609">MVKMIVGLGNPGSKYNDTKHNIGFMAVDRIVKDLDVNFTEDKNFKAEIGSDFINGEKIYFIKPTTFMNNSGIAVKALLTYYNISIKDMIIIYDDLDMEVGKIRFRQKGSAGGHNGIKSIIAHLGTQEFDRIKVGIGRPNGRMTVINHVLGKFDKNDEIMILNTLDKVDNAVNYYLQTNDFQKTMQKYNGLK</sequence>
<gene>
    <name evidence="1" type="primary">pth</name>
    <name type="ordered locus">SAG0007</name>
</gene>
<protein>
    <recommendedName>
        <fullName evidence="1">Peptidyl-tRNA hydrolase</fullName>
        <shortName evidence="1">Pth</shortName>
        <ecNumber evidence="1">3.1.1.29</ecNumber>
    </recommendedName>
</protein>